<name>SYA_MANSM</name>
<proteinExistence type="inferred from homology"/>
<comment type="function">
    <text evidence="1">Catalyzes the attachment of alanine to tRNA(Ala) in a two-step reaction: alanine is first activated by ATP to form Ala-AMP and then transferred to the acceptor end of tRNA(Ala). Also edits incorrectly charged Ser-tRNA(Ala) and Gly-tRNA(Ala) via its editing domain.</text>
</comment>
<comment type="catalytic activity">
    <reaction evidence="1">
        <text>tRNA(Ala) + L-alanine + ATP = L-alanyl-tRNA(Ala) + AMP + diphosphate</text>
        <dbReference type="Rhea" id="RHEA:12540"/>
        <dbReference type="Rhea" id="RHEA-COMP:9657"/>
        <dbReference type="Rhea" id="RHEA-COMP:9923"/>
        <dbReference type="ChEBI" id="CHEBI:30616"/>
        <dbReference type="ChEBI" id="CHEBI:33019"/>
        <dbReference type="ChEBI" id="CHEBI:57972"/>
        <dbReference type="ChEBI" id="CHEBI:78442"/>
        <dbReference type="ChEBI" id="CHEBI:78497"/>
        <dbReference type="ChEBI" id="CHEBI:456215"/>
        <dbReference type="EC" id="6.1.1.7"/>
    </reaction>
</comment>
<comment type="cofactor">
    <cofactor evidence="1">
        <name>Zn(2+)</name>
        <dbReference type="ChEBI" id="CHEBI:29105"/>
    </cofactor>
    <text evidence="1">Binds 1 zinc ion per subunit.</text>
</comment>
<comment type="subcellular location">
    <subcellularLocation>
        <location evidence="1">Cytoplasm</location>
    </subcellularLocation>
</comment>
<comment type="domain">
    <text evidence="1">Consists of three domains; the N-terminal catalytic domain, the editing domain and the C-terminal C-Ala domain. The editing domain removes incorrectly charged amino acids, while the C-Ala domain, along with tRNA(Ala), serves as a bridge to cooperatively bring together the editing and aminoacylation centers thus stimulating deacylation of misacylated tRNAs.</text>
</comment>
<comment type="similarity">
    <text evidence="1">Belongs to the class-II aminoacyl-tRNA synthetase family.</text>
</comment>
<evidence type="ECO:0000255" key="1">
    <source>
        <dbReference type="HAMAP-Rule" id="MF_00036"/>
    </source>
</evidence>
<reference key="1">
    <citation type="journal article" date="2004" name="Nat. Biotechnol.">
        <title>The genome sequence of the capnophilic rumen bacterium Mannheimia succiniciproducens.</title>
        <authorList>
            <person name="Hong S.H."/>
            <person name="Kim J.S."/>
            <person name="Lee S.Y."/>
            <person name="In Y.H."/>
            <person name="Choi S.S."/>
            <person name="Rih J.-K."/>
            <person name="Kim C.H."/>
            <person name="Jeong H."/>
            <person name="Hur C.G."/>
            <person name="Kim J.J."/>
        </authorList>
    </citation>
    <scope>NUCLEOTIDE SEQUENCE [LARGE SCALE GENOMIC DNA]</scope>
    <source>
        <strain>KCTC 0769BP / MBEL55E</strain>
    </source>
</reference>
<sequence>MKTTAQIRQSYLDFFHSKGHQVVESSSLVPHNDPTLLFTNAGMNQFKDVFLGMDKRPYTRATTAQRCVRAGGKHNDLENVGYTARHHTFFEMLGNFSFGDYFKHDAIAYGWEFLTSPQWLGLPKEKLYVTVYETDDEAYDIWNKEVGVPADHIIRIGDNKGAPYASDNFWAMGDTGPCGPCTEIFYDHGEHIWGGLPGTPEEDGDRYIEIWNIVFMQFNRHADGTMEKLPKPSVDTGMGLERIAAVLQHVNSNYDIDIFQTLIKKVAQLTGEKDLTNKSLRVIADHIRSCAYLIADGVMPSNEGRGYVLRRIIRRAVRHGHLLGAKETFFYKLVPTLADVMEHAGEIVNQKRALIEKTLKAEEEQFARTLERGLLLLDDALSQVKDNVLSGDVAFKLYDTYGFPLDLTADVCRERNITIDEKGFEREMQAQRARAQASSNFGVDYNNVIKVDGQTEFKGYETTSLSSAKVVALFTDGKSVERVQSGENAVVILDRTPFYGESGGQIGDTGYIATDLAAFRINDTQKYGQVTGHIGQLESGSLSVGDTVSAQVDTERRLAVAANHSATHLLHAALRKVLGDHVAQKGSLVSESALRFDFIQPEAISKEQIIEIEAIVNRQIRENISVTTEVMDIEAAKQKGAMALFGEKYGDLVRVVGMTGFSIELCGGTHVKRTGDIGLFKVVSESAIAAGIRRIEAVTAENAINWLNNQQNILNQSADLLKSDTASLVEKIQQLQDKAKKAEKELQQLKEKAAMQAGSDLAKSAVKINDISVIVQQLDGIETKSLRVMVDDLKNQLGSGVIVFASVVEDKVNLIVGVTADLTGKVKAGELVNLMAQQVGGKGGGRPDMAMAGGSQPENVGAALSACSDWLESNL</sequence>
<keyword id="KW-0030">Aminoacyl-tRNA synthetase</keyword>
<keyword id="KW-0067">ATP-binding</keyword>
<keyword id="KW-0963">Cytoplasm</keyword>
<keyword id="KW-0436">Ligase</keyword>
<keyword id="KW-0479">Metal-binding</keyword>
<keyword id="KW-0547">Nucleotide-binding</keyword>
<keyword id="KW-0648">Protein biosynthesis</keyword>
<keyword id="KW-0694">RNA-binding</keyword>
<keyword id="KW-0820">tRNA-binding</keyword>
<keyword id="KW-0862">Zinc</keyword>
<dbReference type="EC" id="6.1.1.7" evidence="1"/>
<dbReference type="EMBL" id="AE016827">
    <property type="protein sequence ID" value="AAU36955.1"/>
    <property type="molecule type" value="Genomic_DNA"/>
</dbReference>
<dbReference type="RefSeq" id="WP_011199530.1">
    <property type="nucleotide sequence ID" value="NC_006300.1"/>
</dbReference>
<dbReference type="SMR" id="Q65VQ5"/>
<dbReference type="STRING" id="221988.MS0348"/>
<dbReference type="KEGG" id="msu:MS0348"/>
<dbReference type="eggNOG" id="COG0013">
    <property type="taxonomic scope" value="Bacteria"/>
</dbReference>
<dbReference type="HOGENOM" id="CLU_004485_1_1_6"/>
<dbReference type="OrthoDB" id="9803884at2"/>
<dbReference type="Proteomes" id="UP000000607">
    <property type="component" value="Chromosome"/>
</dbReference>
<dbReference type="GO" id="GO:0005829">
    <property type="term" value="C:cytosol"/>
    <property type="evidence" value="ECO:0007669"/>
    <property type="project" value="TreeGrafter"/>
</dbReference>
<dbReference type="GO" id="GO:0004813">
    <property type="term" value="F:alanine-tRNA ligase activity"/>
    <property type="evidence" value="ECO:0007669"/>
    <property type="project" value="UniProtKB-UniRule"/>
</dbReference>
<dbReference type="GO" id="GO:0002161">
    <property type="term" value="F:aminoacyl-tRNA deacylase activity"/>
    <property type="evidence" value="ECO:0007669"/>
    <property type="project" value="TreeGrafter"/>
</dbReference>
<dbReference type="GO" id="GO:0005524">
    <property type="term" value="F:ATP binding"/>
    <property type="evidence" value="ECO:0007669"/>
    <property type="project" value="UniProtKB-UniRule"/>
</dbReference>
<dbReference type="GO" id="GO:0000049">
    <property type="term" value="F:tRNA binding"/>
    <property type="evidence" value="ECO:0007669"/>
    <property type="project" value="UniProtKB-KW"/>
</dbReference>
<dbReference type="GO" id="GO:0008270">
    <property type="term" value="F:zinc ion binding"/>
    <property type="evidence" value="ECO:0007669"/>
    <property type="project" value="UniProtKB-UniRule"/>
</dbReference>
<dbReference type="GO" id="GO:0006419">
    <property type="term" value="P:alanyl-tRNA aminoacylation"/>
    <property type="evidence" value="ECO:0007669"/>
    <property type="project" value="UniProtKB-UniRule"/>
</dbReference>
<dbReference type="GO" id="GO:0045892">
    <property type="term" value="P:negative regulation of DNA-templated transcription"/>
    <property type="evidence" value="ECO:0007669"/>
    <property type="project" value="TreeGrafter"/>
</dbReference>
<dbReference type="CDD" id="cd00673">
    <property type="entry name" value="AlaRS_core"/>
    <property type="match status" value="1"/>
</dbReference>
<dbReference type="FunFam" id="2.40.30.130:FF:000001">
    <property type="entry name" value="Alanine--tRNA ligase"/>
    <property type="match status" value="1"/>
</dbReference>
<dbReference type="FunFam" id="3.10.310.40:FF:000001">
    <property type="entry name" value="Alanine--tRNA ligase"/>
    <property type="match status" value="1"/>
</dbReference>
<dbReference type="FunFam" id="3.30.54.20:FF:000001">
    <property type="entry name" value="Alanine--tRNA ligase"/>
    <property type="match status" value="1"/>
</dbReference>
<dbReference type="FunFam" id="3.30.930.10:FF:000004">
    <property type="entry name" value="Alanine--tRNA ligase"/>
    <property type="match status" value="1"/>
</dbReference>
<dbReference type="FunFam" id="3.30.980.10:FF:000004">
    <property type="entry name" value="Alanine--tRNA ligase, cytoplasmic"/>
    <property type="match status" value="1"/>
</dbReference>
<dbReference type="Gene3D" id="2.40.30.130">
    <property type="match status" value="1"/>
</dbReference>
<dbReference type="Gene3D" id="3.10.310.40">
    <property type="match status" value="1"/>
</dbReference>
<dbReference type="Gene3D" id="3.30.54.20">
    <property type="match status" value="1"/>
</dbReference>
<dbReference type="Gene3D" id="6.10.250.550">
    <property type="match status" value="1"/>
</dbReference>
<dbReference type="Gene3D" id="3.30.930.10">
    <property type="entry name" value="Bira Bifunctional Protein, Domain 2"/>
    <property type="match status" value="1"/>
</dbReference>
<dbReference type="Gene3D" id="3.30.980.10">
    <property type="entry name" value="Threonyl-trna Synthetase, Chain A, domain 2"/>
    <property type="match status" value="1"/>
</dbReference>
<dbReference type="HAMAP" id="MF_00036_B">
    <property type="entry name" value="Ala_tRNA_synth_B"/>
    <property type="match status" value="1"/>
</dbReference>
<dbReference type="InterPro" id="IPR045864">
    <property type="entry name" value="aa-tRNA-synth_II/BPL/LPL"/>
</dbReference>
<dbReference type="InterPro" id="IPR002318">
    <property type="entry name" value="Ala-tRNA-lgiase_IIc"/>
</dbReference>
<dbReference type="InterPro" id="IPR018162">
    <property type="entry name" value="Ala-tRNA-ligase_IIc_anticod-bd"/>
</dbReference>
<dbReference type="InterPro" id="IPR018165">
    <property type="entry name" value="Ala-tRNA-synth_IIc_core"/>
</dbReference>
<dbReference type="InterPro" id="IPR018164">
    <property type="entry name" value="Ala-tRNA-synth_IIc_N"/>
</dbReference>
<dbReference type="InterPro" id="IPR050058">
    <property type="entry name" value="Ala-tRNA_ligase"/>
</dbReference>
<dbReference type="InterPro" id="IPR023033">
    <property type="entry name" value="Ala_tRNA_ligase_euk/bac"/>
</dbReference>
<dbReference type="InterPro" id="IPR003156">
    <property type="entry name" value="DHHA1_dom"/>
</dbReference>
<dbReference type="InterPro" id="IPR018163">
    <property type="entry name" value="Thr/Ala-tRNA-synth_IIc_edit"/>
</dbReference>
<dbReference type="InterPro" id="IPR009000">
    <property type="entry name" value="Transl_B-barrel_sf"/>
</dbReference>
<dbReference type="InterPro" id="IPR012947">
    <property type="entry name" value="tRNA_SAD"/>
</dbReference>
<dbReference type="NCBIfam" id="TIGR00344">
    <property type="entry name" value="alaS"/>
    <property type="match status" value="1"/>
</dbReference>
<dbReference type="PANTHER" id="PTHR11777:SF9">
    <property type="entry name" value="ALANINE--TRNA LIGASE, CYTOPLASMIC"/>
    <property type="match status" value="1"/>
</dbReference>
<dbReference type="PANTHER" id="PTHR11777">
    <property type="entry name" value="ALANYL-TRNA SYNTHETASE"/>
    <property type="match status" value="1"/>
</dbReference>
<dbReference type="Pfam" id="PF02272">
    <property type="entry name" value="DHHA1"/>
    <property type="match status" value="1"/>
</dbReference>
<dbReference type="Pfam" id="PF01411">
    <property type="entry name" value="tRNA-synt_2c"/>
    <property type="match status" value="1"/>
</dbReference>
<dbReference type="Pfam" id="PF07973">
    <property type="entry name" value="tRNA_SAD"/>
    <property type="match status" value="1"/>
</dbReference>
<dbReference type="PRINTS" id="PR00980">
    <property type="entry name" value="TRNASYNTHALA"/>
</dbReference>
<dbReference type="SMART" id="SM00863">
    <property type="entry name" value="tRNA_SAD"/>
    <property type="match status" value="1"/>
</dbReference>
<dbReference type="SUPFAM" id="SSF55681">
    <property type="entry name" value="Class II aaRS and biotin synthetases"/>
    <property type="match status" value="1"/>
</dbReference>
<dbReference type="SUPFAM" id="SSF101353">
    <property type="entry name" value="Putative anticodon-binding domain of alanyl-tRNA synthetase (AlaRS)"/>
    <property type="match status" value="1"/>
</dbReference>
<dbReference type="SUPFAM" id="SSF55186">
    <property type="entry name" value="ThrRS/AlaRS common domain"/>
    <property type="match status" value="1"/>
</dbReference>
<dbReference type="SUPFAM" id="SSF50447">
    <property type="entry name" value="Translation proteins"/>
    <property type="match status" value="1"/>
</dbReference>
<dbReference type="PROSITE" id="PS50860">
    <property type="entry name" value="AA_TRNA_LIGASE_II_ALA"/>
    <property type="match status" value="1"/>
</dbReference>
<accession>Q65VQ5</accession>
<gene>
    <name evidence="1" type="primary">alaS</name>
    <name type="ordered locus">MS0348</name>
</gene>
<protein>
    <recommendedName>
        <fullName evidence="1">Alanine--tRNA ligase</fullName>
        <ecNumber evidence="1">6.1.1.7</ecNumber>
    </recommendedName>
    <alternativeName>
        <fullName evidence="1">Alanyl-tRNA synthetase</fullName>
        <shortName evidence="1">AlaRS</shortName>
    </alternativeName>
</protein>
<feature type="chain" id="PRO_0000075141" description="Alanine--tRNA ligase">
    <location>
        <begin position="1"/>
        <end position="875"/>
    </location>
</feature>
<feature type="binding site" evidence="1">
    <location>
        <position position="564"/>
    </location>
    <ligand>
        <name>Zn(2+)</name>
        <dbReference type="ChEBI" id="CHEBI:29105"/>
    </ligand>
</feature>
<feature type="binding site" evidence="1">
    <location>
        <position position="568"/>
    </location>
    <ligand>
        <name>Zn(2+)</name>
        <dbReference type="ChEBI" id="CHEBI:29105"/>
    </ligand>
</feature>
<feature type="binding site" evidence="1">
    <location>
        <position position="666"/>
    </location>
    <ligand>
        <name>Zn(2+)</name>
        <dbReference type="ChEBI" id="CHEBI:29105"/>
    </ligand>
</feature>
<feature type="binding site" evidence="1">
    <location>
        <position position="670"/>
    </location>
    <ligand>
        <name>Zn(2+)</name>
        <dbReference type="ChEBI" id="CHEBI:29105"/>
    </ligand>
</feature>
<organism>
    <name type="scientific">Mannheimia succiniciproducens (strain KCTC 0769BP / MBEL55E)</name>
    <dbReference type="NCBI Taxonomy" id="221988"/>
    <lineage>
        <taxon>Bacteria</taxon>
        <taxon>Pseudomonadati</taxon>
        <taxon>Pseudomonadota</taxon>
        <taxon>Gammaproteobacteria</taxon>
        <taxon>Pasteurellales</taxon>
        <taxon>Pasteurellaceae</taxon>
        <taxon>Basfia</taxon>
    </lineage>
</organism>